<accession>Q9Z2N6</accession>
<keyword id="KW-0963">Cytoplasm</keyword>
<keyword id="KW-0539">Nucleus</keyword>
<keyword id="KW-0649">Protein kinase inhibitor</keyword>
<keyword id="KW-1185">Reference proteome</keyword>
<keyword id="KW-0770">Synapse</keyword>
<reference key="1">
    <citation type="journal article" date="1998" name="Proc. Natl. Acad. Sci. U.S.A.">
        <title>Characterization of a calmodulin kinase II inhibitor protein in brain.</title>
        <authorList>
            <person name="Chang B.H."/>
            <person name="Mukherji S."/>
            <person name="Soderling T.R."/>
        </authorList>
    </citation>
    <scope>NUCLEOTIDE SEQUENCE [MRNA]</scope>
    <scope>FUNCTION</scope>
    <scope>INTERACTION WITH CAMK2A AND CAMK2B</scope>
    <scope>SUBCELLULAR LOCATION</scope>
    <scope>TISSUE SPECIFICITY</scope>
    <source>
        <tissue>Brain</tissue>
    </source>
</reference>
<reference key="2">
    <citation type="journal article" date="2001" name="Neuroscience">
        <title>Calcium/calmodulin-dependent protein kinase II inhibitor protein: localization of isoforms in rat brain.</title>
        <authorList>
            <person name="Chang B.H."/>
            <person name="Mukherji S."/>
            <person name="Soderling T.R."/>
        </authorList>
    </citation>
    <scope>INTERACTION WITH CAMK2B</scope>
    <scope>TISSUE SPECIFICITY</scope>
</reference>
<reference key="3">
    <citation type="journal article" date="2007" name="Mol. Biol. Cell">
        <title>Dual mechanism of a natural CaMKII inhibitor.</title>
        <authorList>
            <person name="Vest R.S."/>
            <person name="Davies K.D."/>
            <person name="O'Leary H."/>
            <person name="Port J.D."/>
            <person name="Bayer K.U."/>
        </authorList>
    </citation>
    <scope>FUNCTION</scope>
</reference>
<name>CK2N2_RAT</name>
<feature type="chain" id="PRO_0000327268" description="Calcium/calmodulin-dependent protein kinase II inhibitor 2">
    <location>
        <begin position="1"/>
        <end position="79"/>
    </location>
</feature>
<feature type="region of interest" description="Disordered" evidence="2">
    <location>
        <begin position="1"/>
        <end position="21"/>
    </location>
</feature>
<feature type="region of interest" description="Inhibitory domain">
    <location>
        <begin position="43"/>
        <end position="69"/>
    </location>
</feature>
<dbReference type="EMBL" id="AF041854">
    <property type="protein sequence ID" value="AAD02202.1"/>
    <property type="molecule type" value="mRNA"/>
</dbReference>
<dbReference type="RefSeq" id="NP_067710.1">
    <property type="nucleotide sequence ID" value="NM_021678.1"/>
</dbReference>
<dbReference type="RefSeq" id="XP_063126828.1">
    <property type="nucleotide sequence ID" value="XM_063270758.1"/>
</dbReference>
<dbReference type="FunCoup" id="Q9Z2N6">
    <property type="interactions" value="574"/>
</dbReference>
<dbReference type="STRING" id="10116.ENSRNOP00000054937"/>
<dbReference type="PhosphoSitePlus" id="Q9Z2N6"/>
<dbReference type="PaxDb" id="10116-ENSRNOP00000054937"/>
<dbReference type="GeneID" id="59314"/>
<dbReference type="KEGG" id="rno:59314"/>
<dbReference type="AGR" id="RGD:708411"/>
<dbReference type="CTD" id="94032"/>
<dbReference type="RGD" id="708411">
    <property type="gene designation" value="Camk2n2"/>
</dbReference>
<dbReference type="eggNOG" id="ENOG502S4FG">
    <property type="taxonomic scope" value="Eukaryota"/>
</dbReference>
<dbReference type="HOGENOM" id="CLU_197183_0_0_1"/>
<dbReference type="InParanoid" id="Q9Z2N6"/>
<dbReference type="OrthoDB" id="9922824at2759"/>
<dbReference type="PhylomeDB" id="Q9Z2N6"/>
<dbReference type="PRO" id="PR:Q9Z2N6"/>
<dbReference type="Proteomes" id="UP000002494">
    <property type="component" value="Chromosome 11"/>
</dbReference>
<dbReference type="Bgee" id="ENSRNOG00000038184">
    <property type="expression patterns" value="Expressed in cerebellum and 15 other cell types or tissues"/>
</dbReference>
<dbReference type="GO" id="GO:0005829">
    <property type="term" value="C:cytosol"/>
    <property type="evidence" value="ECO:0007669"/>
    <property type="project" value="UniProtKB-SubCell"/>
</dbReference>
<dbReference type="GO" id="GO:0005634">
    <property type="term" value="C:nucleus"/>
    <property type="evidence" value="ECO:0007669"/>
    <property type="project" value="UniProtKB-SubCell"/>
</dbReference>
<dbReference type="GO" id="GO:0045202">
    <property type="term" value="C:synapse"/>
    <property type="evidence" value="ECO:0000250"/>
    <property type="project" value="UniProtKB"/>
</dbReference>
<dbReference type="GO" id="GO:0008427">
    <property type="term" value="F:calcium-dependent protein kinase inhibitor activity"/>
    <property type="evidence" value="ECO:0000315"/>
    <property type="project" value="RGD"/>
</dbReference>
<dbReference type="GO" id="GO:0019901">
    <property type="term" value="F:protein kinase binding"/>
    <property type="evidence" value="ECO:0000315"/>
    <property type="project" value="RGD"/>
</dbReference>
<dbReference type="GO" id="GO:0048167">
    <property type="term" value="P:regulation of synaptic plasticity"/>
    <property type="evidence" value="ECO:0000304"/>
    <property type="project" value="RGD"/>
</dbReference>
<dbReference type="InterPro" id="IPR026779">
    <property type="entry name" value="Camk2n"/>
</dbReference>
<dbReference type="PANTHER" id="PTHR31007">
    <property type="entry name" value="CALCIUM/CALMODULIN-DEPENDENT PROTEIN KINASE II INHIBITOR 2"/>
    <property type="match status" value="1"/>
</dbReference>
<dbReference type="PANTHER" id="PTHR31007:SF1">
    <property type="entry name" value="CALCIUM_CALMODULIN-DEPENDENT PROTEIN KINASE II INHIBITOR 2"/>
    <property type="match status" value="1"/>
</dbReference>
<dbReference type="Pfam" id="PF15170">
    <property type="entry name" value="CaM-KIIN"/>
    <property type="match status" value="1"/>
</dbReference>
<proteinExistence type="evidence at protein level"/>
<evidence type="ECO:0000250" key="1">
    <source>
        <dbReference type="UniProtKB" id="Q78WH7"/>
    </source>
</evidence>
<evidence type="ECO:0000256" key="2">
    <source>
        <dbReference type="SAM" id="MobiDB-lite"/>
    </source>
</evidence>
<evidence type="ECO:0000269" key="3">
    <source>
    </source>
</evidence>
<evidence type="ECO:0000269" key="4">
    <source>
    </source>
</evidence>
<evidence type="ECO:0000269" key="5">
    <source>
    </source>
</evidence>
<evidence type="ECO:0000305" key="6"/>
<comment type="function">
    <text evidence="4 5">Potent and specific cellular inhibitor of CaM-kinase II (CAMK2) (PubMed:17942605, PubMed:9724800). Traps Ca(2+)/calmodulin on CAMK2 (PubMed:17942605).</text>
</comment>
<comment type="subunit">
    <text evidence="3 5">Interacts with CAMK2A and CAMK2B in the presence of Ca(2+)/calmodulin or after autophosphorylation.</text>
</comment>
<comment type="subcellular location">
    <subcellularLocation>
        <location evidence="5">Nucleus</location>
    </subcellularLocation>
    <subcellularLocation>
        <location evidence="5">Cytoplasm</location>
        <location evidence="5">Cytosol</location>
    </subcellularLocation>
    <subcellularLocation>
        <location evidence="1">Synapse</location>
    </subcellularLocation>
    <text evidence="5">Excluded from nucleus when coexpressed with activated CAMK2.</text>
</comment>
<comment type="tissue specificity">
    <text evidence="3 5">Expressed in forebrain, hippocampus, midbrain, cerebellum, and testis. Expressed in forebrain, hippocampus, midbrain, and cerebellum (at protein level). In the cortex expressed more in laminae II and III than in laminae IV-VI. Expressed within the pyramidal layer of the hippocampus and granular layer of the dentate gyrus as well as in the olfactory bulb. Diffusely expressed within the caudate-putamen and globus pallidus. Diffusely expressed throughout regions of the midbrain. In cerebellum, expressed within the Purkinje and granular layer. Stronger expressed in the cerebellum. Highly expressed in frontal cortex, hippocampus, olfactory bulb, caudate-putamen and cerebellum exhibit (at protein level).</text>
</comment>
<comment type="similarity">
    <text evidence="6">Belongs to the CAMK2N family.</text>
</comment>
<sequence length="79" mass="8628">MSEILPYGEDKMGRFGADPEGSDLSFSCRLQDTNSFFAGNQAKRPPKLGQIGRAKRVVIEDDRIDDVLKGMGEKPPSGV</sequence>
<gene>
    <name type="primary">Camk2n2</name>
</gene>
<protein>
    <recommendedName>
        <fullName>Calcium/calmodulin-dependent protein kinase II inhibitor 2</fullName>
    </recommendedName>
    <alternativeName>
        <fullName>CaM-KII inhibitory protein</fullName>
        <shortName>CaM-KIIN</shortName>
    </alternativeName>
    <alternativeName>
        <fullName>CaM-KIINbeta</fullName>
    </alternativeName>
</protein>
<organism>
    <name type="scientific">Rattus norvegicus</name>
    <name type="common">Rat</name>
    <dbReference type="NCBI Taxonomy" id="10116"/>
    <lineage>
        <taxon>Eukaryota</taxon>
        <taxon>Metazoa</taxon>
        <taxon>Chordata</taxon>
        <taxon>Craniata</taxon>
        <taxon>Vertebrata</taxon>
        <taxon>Euteleostomi</taxon>
        <taxon>Mammalia</taxon>
        <taxon>Eutheria</taxon>
        <taxon>Euarchontoglires</taxon>
        <taxon>Glires</taxon>
        <taxon>Rodentia</taxon>
        <taxon>Myomorpha</taxon>
        <taxon>Muroidea</taxon>
        <taxon>Muridae</taxon>
        <taxon>Murinae</taxon>
        <taxon>Rattus</taxon>
    </lineage>
</organism>